<dbReference type="EMBL" id="AE000657">
    <property type="protein sequence ID" value="AAC07704.1"/>
    <property type="molecule type" value="Genomic_DNA"/>
</dbReference>
<dbReference type="PIR" id="D70464">
    <property type="entry name" value="D70464"/>
</dbReference>
<dbReference type="RefSeq" id="NP_214312.1">
    <property type="nucleotide sequence ID" value="NC_000918.1"/>
</dbReference>
<dbReference type="RefSeq" id="WP_010881248.1">
    <property type="nucleotide sequence ID" value="NC_000918.1"/>
</dbReference>
<dbReference type="EnsemblBacteria" id="AAC07704">
    <property type="protein sequence ID" value="AAC07704"/>
    <property type="gene ID" value="aq_1909"/>
</dbReference>
<dbReference type="KEGG" id="aae:aq_1909"/>
<dbReference type="eggNOG" id="COG1547">
    <property type="taxonomic scope" value="Bacteria"/>
</dbReference>
<dbReference type="HOGENOM" id="CLU_899083_0_0_0"/>
<dbReference type="InParanoid" id="O67744"/>
<dbReference type="OrthoDB" id="13436at2"/>
<dbReference type="Proteomes" id="UP000000798">
    <property type="component" value="Chromosome"/>
</dbReference>
<reference key="1">
    <citation type="journal article" date="1998" name="Nature">
        <title>The complete genome of the hyperthermophilic bacterium Aquifex aeolicus.</title>
        <authorList>
            <person name="Deckert G."/>
            <person name="Warren P.V."/>
            <person name="Gaasterland T."/>
            <person name="Young W.G."/>
            <person name="Lenox A.L."/>
            <person name="Graham D.E."/>
            <person name="Overbeek R."/>
            <person name="Snead M.A."/>
            <person name="Keller M."/>
            <person name="Aujay M."/>
            <person name="Huber R."/>
            <person name="Feldman R.A."/>
            <person name="Short J.M."/>
            <person name="Olsen G.J."/>
            <person name="Swanson R.V."/>
        </authorList>
    </citation>
    <scope>NUCLEOTIDE SEQUENCE [LARGE SCALE GENOMIC DNA]</scope>
    <source>
        <strain>VF5</strain>
    </source>
</reference>
<sequence length="309" mass="36777">MLRLWEELNRVENLFLELLDDPKKKDVLLYLICYCQLVRRDGEYEVELPKLINCAEKPYKYISGNWQDVLLELGVLYLKDKKGKVYTGKEILLVKNPEGFKVGILPDYREDFYKFYTKLLKYWSVLNSRRTLGSNTTPDYYTPLLVHTFNEKLFKEAQYFSEILAMRFPKEKNLFLSVKLVSEFYREYAKTGRVKADNLNDAINFLSDTPDVFYSVNVKKFKKDIKKFLENLNKGEFYYITIEFASENRGKKRSILSKLWNFIKSLGGKRWNSRSSGMDYYSFIEHLLKKHRRQMMRSLESSTPRLQGT</sequence>
<gene>
    <name type="ordered locus">aq_1909</name>
</gene>
<keyword id="KW-1185">Reference proteome</keyword>
<name>Y1909_AQUAE</name>
<protein>
    <recommendedName>
        <fullName>Uncharacterized protein aq_1909</fullName>
    </recommendedName>
</protein>
<organism>
    <name type="scientific">Aquifex aeolicus (strain VF5)</name>
    <dbReference type="NCBI Taxonomy" id="224324"/>
    <lineage>
        <taxon>Bacteria</taxon>
        <taxon>Pseudomonadati</taxon>
        <taxon>Aquificota</taxon>
        <taxon>Aquificia</taxon>
        <taxon>Aquificales</taxon>
        <taxon>Aquificaceae</taxon>
        <taxon>Aquifex</taxon>
    </lineage>
</organism>
<feature type="chain" id="PRO_0000186958" description="Uncharacterized protein aq_1909">
    <location>
        <begin position="1"/>
        <end position="309"/>
    </location>
</feature>
<proteinExistence type="predicted"/>
<accession>O67744</accession>